<accession>Q2IM42</accession>
<protein>
    <recommendedName>
        <fullName evidence="1">Glucose-1-phosphate adenylyltransferase</fullName>
        <ecNumber evidence="1">2.7.7.27</ecNumber>
    </recommendedName>
    <alternativeName>
        <fullName evidence="1">ADP-glucose pyrophosphorylase</fullName>
        <shortName evidence="1">ADPGlc PPase</shortName>
    </alternativeName>
    <alternativeName>
        <fullName evidence="1">ADP-glucose synthase</fullName>
    </alternativeName>
</protein>
<comment type="function">
    <text evidence="1">Involved in the biosynthesis of ADP-glucose, a building block required for the elongation reactions to produce glycogen. Catalyzes the reaction between ATP and alpha-D-glucose 1-phosphate (G1P) to produce pyrophosphate and ADP-Glc.</text>
</comment>
<comment type="catalytic activity">
    <reaction evidence="1">
        <text>alpha-D-glucose 1-phosphate + ATP + H(+) = ADP-alpha-D-glucose + diphosphate</text>
        <dbReference type="Rhea" id="RHEA:12120"/>
        <dbReference type="ChEBI" id="CHEBI:15378"/>
        <dbReference type="ChEBI" id="CHEBI:30616"/>
        <dbReference type="ChEBI" id="CHEBI:33019"/>
        <dbReference type="ChEBI" id="CHEBI:57498"/>
        <dbReference type="ChEBI" id="CHEBI:58601"/>
        <dbReference type="EC" id="2.7.7.27"/>
    </reaction>
</comment>
<comment type="pathway">
    <text evidence="1">Glycan biosynthesis; glycogen biosynthesis.</text>
</comment>
<comment type="subunit">
    <text evidence="1">Homotetramer.</text>
</comment>
<comment type="similarity">
    <text evidence="1">Belongs to the bacterial/plant glucose-1-phosphate adenylyltransferase family.</text>
</comment>
<sequence length="413" mass="46524">MAKLLAMILAGGEGRRLDPLTRDRAKPAVPFGGRYRIVDFVLSNMANSGILKMKVVVQYKSESLNTHVQRAWRLTSLLNQYVELVPAQMRVGPKWFEGSADAIYQNLNIITDEEPDFTFVFGADHVYRMDARQMLAFHQDRKADLTVAAVPIPVGEASEFGIIEVDAEGRMVGFVEKPTSDPKTMPGDPTRCLASMGNYLFTTEALVQEIVRDAGDPASAHDFGKSIVASMYQRKRVYVYDFARNVVPGQTERERGYWRDVGSIDAYFQANMDLVAVDPVFSLYNDEWPIFTVQYNYPPAKFVFNNERDNRIGRATDSLISEGCIISGAHVHHSILSPKVRVNSYATVEESIVFENVNIGRHCRIRRAIIDKHVDIPAHTTIGFDHEKDRKHFHVTESGIVIIPKGMRIEAGR</sequence>
<proteinExistence type="inferred from homology"/>
<name>GLGC_ANADE</name>
<organism>
    <name type="scientific">Anaeromyxobacter dehalogenans (strain 2CP-C)</name>
    <dbReference type="NCBI Taxonomy" id="290397"/>
    <lineage>
        <taxon>Bacteria</taxon>
        <taxon>Pseudomonadati</taxon>
        <taxon>Myxococcota</taxon>
        <taxon>Myxococcia</taxon>
        <taxon>Myxococcales</taxon>
        <taxon>Cystobacterineae</taxon>
        <taxon>Anaeromyxobacteraceae</taxon>
        <taxon>Anaeromyxobacter</taxon>
    </lineage>
</organism>
<reference key="1">
    <citation type="submission" date="2006-01" db="EMBL/GenBank/DDBJ databases">
        <title>Complete sequence of Anaeromyxobacter dehalogenans 2CP-C.</title>
        <authorList>
            <person name="Copeland A."/>
            <person name="Lucas S."/>
            <person name="Lapidus A."/>
            <person name="Barry K."/>
            <person name="Detter J.C."/>
            <person name="Glavina T."/>
            <person name="Hammon N."/>
            <person name="Israni S."/>
            <person name="Pitluck S."/>
            <person name="Brettin T."/>
            <person name="Bruce D."/>
            <person name="Han C."/>
            <person name="Tapia R."/>
            <person name="Gilna P."/>
            <person name="Kiss H."/>
            <person name="Schmutz J."/>
            <person name="Larimer F."/>
            <person name="Land M."/>
            <person name="Kyrpides N."/>
            <person name="Anderson I."/>
            <person name="Sanford R.A."/>
            <person name="Ritalahti K.M."/>
            <person name="Thomas H.S."/>
            <person name="Kirby J.R."/>
            <person name="Zhulin I.B."/>
            <person name="Loeffler F.E."/>
            <person name="Richardson P."/>
        </authorList>
    </citation>
    <scope>NUCLEOTIDE SEQUENCE [LARGE SCALE GENOMIC DNA]</scope>
    <source>
        <strain>2CP-C</strain>
    </source>
</reference>
<gene>
    <name evidence="1" type="primary">glgC</name>
    <name type="ordered locus">Adeh_0100</name>
</gene>
<keyword id="KW-0067">ATP-binding</keyword>
<keyword id="KW-0119">Carbohydrate metabolism</keyword>
<keyword id="KW-0320">Glycogen biosynthesis</keyword>
<keyword id="KW-0321">Glycogen metabolism</keyword>
<keyword id="KW-0547">Nucleotide-binding</keyword>
<keyword id="KW-0548">Nucleotidyltransferase</keyword>
<keyword id="KW-1185">Reference proteome</keyword>
<keyword id="KW-0808">Transferase</keyword>
<dbReference type="EC" id="2.7.7.27" evidence="1"/>
<dbReference type="EMBL" id="CP000251">
    <property type="protein sequence ID" value="ABC79877.1"/>
    <property type="molecule type" value="Genomic_DNA"/>
</dbReference>
<dbReference type="RefSeq" id="WP_011419160.1">
    <property type="nucleotide sequence ID" value="NC_007760.1"/>
</dbReference>
<dbReference type="SMR" id="Q2IM42"/>
<dbReference type="STRING" id="290397.Adeh_0100"/>
<dbReference type="KEGG" id="ade:Adeh_0100"/>
<dbReference type="eggNOG" id="COG0448">
    <property type="taxonomic scope" value="Bacteria"/>
</dbReference>
<dbReference type="HOGENOM" id="CLU_029499_14_1_7"/>
<dbReference type="OrthoDB" id="9801810at2"/>
<dbReference type="UniPathway" id="UPA00164"/>
<dbReference type="Proteomes" id="UP000001935">
    <property type="component" value="Chromosome"/>
</dbReference>
<dbReference type="GO" id="GO:0005524">
    <property type="term" value="F:ATP binding"/>
    <property type="evidence" value="ECO:0007669"/>
    <property type="project" value="UniProtKB-KW"/>
</dbReference>
<dbReference type="GO" id="GO:0008878">
    <property type="term" value="F:glucose-1-phosphate adenylyltransferase activity"/>
    <property type="evidence" value="ECO:0007669"/>
    <property type="project" value="UniProtKB-UniRule"/>
</dbReference>
<dbReference type="GO" id="GO:0005978">
    <property type="term" value="P:glycogen biosynthetic process"/>
    <property type="evidence" value="ECO:0007669"/>
    <property type="project" value="UniProtKB-UniRule"/>
</dbReference>
<dbReference type="CDD" id="cd02508">
    <property type="entry name" value="ADP_Glucose_PP"/>
    <property type="match status" value="1"/>
</dbReference>
<dbReference type="CDD" id="cd04651">
    <property type="entry name" value="LbH_G1P_AT_C"/>
    <property type="match status" value="1"/>
</dbReference>
<dbReference type="Gene3D" id="2.160.10.10">
    <property type="entry name" value="Hexapeptide repeat proteins"/>
    <property type="match status" value="1"/>
</dbReference>
<dbReference type="Gene3D" id="3.90.550.10">
    <property type="entry name" value="Spore Coat Polysaccharide Biosynthesis Protein SpsA, Chain A"/>
    <property type="match status" value="1"/>
</dbReference>
<dbReference type="HAMAP" id="MF_00624">
    <property type="entry name" value="GlgC"/>
    <property type="match status" value="1"/>
</dbReference>
<dbReference type="InterPro" id="IPR011831">
    <property type="entry name" value="ADP-Glc_PPase"/>
</dbReference>
<dbReference type="InterPro" id="IPR005836">
    <property type="entry name" value="ADP_Glu_pyroP_CS"/>
</dbReference>
<dbReference type="InterPro" id="IPR023049">
    <property type="entry name" value="GlgC_bac"/>
</dbReference>
<dbReference type="InterPro" id="IPR056818">
    <property type="entry name" value="GlmU/GlgC-like_hexapep"/>
</dbReference>
<dbReference type="InterPro" id="IPR005835">
    <property type="entry name" value="NTP_transferase_dom"/>
</dbReference>
<dbReference type="InterPro" id="IPR029044">
    <property type="entry name" value="Nucleotide-diphossugar_trans"/>
</dbReference>
<dbReference type="InterPro" id="IPR011004">
    <property type="entry name" value="Trimer_LpxA-like_sf"/>
</dbReference>
<dbReference type="NCBIfam" id="TIGR02091">
    <property type="entry name" value="glgC"/>
    <property type="match status" value="1"/>
</dbReference>
<dbReference type="NCBIfam" id="NF001947">
    <property type="entry name" value="PRK00725.1"/>
    <property type="match status" value="1"/>
</dbReference>
<dbReference type="NCBIfam" id="NF002023">
    <property type="entry name" value="PRK00844.1"/>
    <property type="match status" value="1"/>
</dbReference>
<dbReference type="PANTHER" id="PTHR43523:SF2">
    <property type="entry name" value="GLUCOSE-1-PHOSPHATE ADENYLYLTRANSFERASE"/>
    <property type="match status" value="1"/>
</dbReference>
<dbReference type="PANTHER" id="PTHR43523">
    <property type="entry name" value="GLUCOSE-1-PHOSPHATE ADENYLYLTRANSFERASE-RELATED"/>
    <property type="match status" value="1"/>
</dbReference>
<dbReference type="Pfam" id="PF24894">
    <property type="entry name" value="Hexapep_GlmU"/>
    <property type="match status" value="1"/>
</dbReference>
<dbReference type="Pfam" id="PF00483">
    <property type="entry name" value="NTP_transferase"/>
    <property type="match status" value="1"/>
</dbReference>
<dbReference type="SUPFAM" id="SSF53448">
    <property type="entry name" value="Nucleotide-diphospho-sugar transferases"/>
    <property type="match status" value="1"/>
</dbReference>
<dbReference type="SUPFAM" id="SSF51161">
    <property type="entry name" value="Trimeric LpxA-like enzymes"/>
    <property type="match status" value="1"/>
</dbReference>
<dbReference type="PROSITE" id="PS00809">
    <property type="entry name" value="ADP_GLC_PYROPHOSPH_2"/>
    <property type="match status" value="1"/>
</dbReference>
<evidence type="ECO:0000255" key="1">
    <source>
        <dbReference type="HAMAP-Rule" id="MF_00624"/>
    </source>
</evidence>
<feature type="chain" id="PRO_0000261859" description="Glucose-1-phosphate adenylyltransferase">
    <location>
        <begin position="1"/>
        <end position="413"/>
    </location>
</feature>
<feature type="binding site" evidence="1">
    <location>
        <position position="161"/>
    </location>
    <ligand>
        <name>alpha-D-glucose 1-phosphate</name>
        <dbReference type="ChEBI" id="CHEBI:58601"/>
    </ligand>
</feature>
<feature type="binding site" evidence="1">
    <location>
        <begin position="176"/>
        <end position="177"/>
    </location>
    <ligand>
        <name>alpha-D-glucose 1-phosphate</name>
        <dbReference type="ChEBI" id="CHEBI:58601"/>
    </ligand>
</feature>
<feature type="binding site" evidence="1">
    <location>
        <position position="195"/>
    </location>
    <ligand>
        <name>alpha-D-glucose 1-phosphate</name>
        <dbReference type="ChEBI" id="CHEBI:58601"/>
    </ligand>
</feature>